<comment type="function">
    <text evidence="1 5">Modulates blood feeding of female mosquitoes on vertebrate species by binding and sequestering different mediators involved in the host response (By similarity). Binds serotonin, noradrenaline, histamine and adrenaline (PubMed:16301315). Inhibits histamine-, serotonin- and noradrenaline-induced smooth muscle contraction (PubMed:16301315). Exhibits vasodilating activity (PubMed:16301315).</text>
</comment>
<comment type="subcellular location">
    <subcellularLocation>
        <location evidence="6">Secreted</location>
    </subcellularLocation>
</comment>
<comment type="tissue specificity">
    <text evidence="4 6 7">Female saliva (at protein level) (PubMed:17913537). Female salivary gland (PubMed:9990055). Low-level expression in female carcass without salivary glands (PubMed:9990055). Not detected in male tissues (PubMed:11841502, PubMed:9990055).</text>
</comment>
<comment type="developmental stage">
    <text evidence="4">Not detected in embryo, larval and pupal stages.</text>
</comment>
<comment type="similarity">
    <text evidence="9">Belongs to the PBP/GOBP family.</text>
</comment>
<name>D7R3_ANOGA</name>
<organism evidence="13">
    <name type="scientific">Anopheles gambiae</name>
    <name type="common">African malaria mosquito</name>
    <dbReference type="NCBI Taxonomy" id="7165"/>
    <lineage>
        <taxon>Eukaryota</taxon>
        <taxon>Metazoa</taxon>
        <taxon>Ecdysozoa</taxon>
        <taxon>Arthropoda</taxon>
        <taxon>Hexapoda</taxon>
        <taxon>Insecta</taxon>
        <taxon>Pterygota</taxon>
        <taxon>Neoptera</taxon>
        <taxon>Endopterygota</taxon>
        <taxon>Diptera</taxon>
        <taxon>Nematocera</taxon>
        <taxon>Culicoidea</taxon>
        <taxon>Culicidae</taxon>
        <taxon>Anophelinae</taxon>
        <taxon>Anopheles</taxon>
    </lineage>
</organism>
<dbReference type="EMBL" id="AJ133854">
    <property type="protein sequence ID" value="CAB39729.1"/>
    <property type="molecule type" value="mRNA"/>
</dbReference>
<dbReference type="EMBL" id="AY045760">
    <property type="protein sequence ID" value="AAK84943.1"/>
    <property type="molecule type" value="Genomic_DNA"/>
</dbReference>
<dbReference type="EMBL" id="AAAB01008964">
    <property type="status" value="NOT_ANNOTATED_CDS"/>
    <property type="molecule type" value="Genomic_DNA"/>
</dbReference>
<dbReference type="EMBL" id="AJ000035">
    <property type="protein sequence ID" value="CAA03871.1"/>
    <property type="molecule type" value="mRNA"/>
</dbReference>
<dbReference type="SMR" id="A0A1S4GYH9"/>
<dbReference type="EnsemblMetazoa" id="AGAP008283-RA">
    <property type="protein sequence ID" value="AGAP008283-PA"/>
    <property type="gene ID" value="AGAP008283"/>
</dbReference>
<dbReference type="VEuPathDB" id="VectorBase:AGAMI1_005193"/>
<dbReference type="VEuPathDB" id="VectorBase:AGAP008283"/>
<dbReference type="HOGENOM" id="CLU_1612198_0_0_1"/>
<dbReference type="InParanoid" id="A0A1S4GYH9"/>
<dbReference type="Proteomes" id="UP000007062">
    <property type="component" value="Chromosome 3R"/>
</dbReference>
<dbReference type="GO" id="GO:0005615">
    <property type="term" value="C:extracellular space"/>
    <property type="evidence" value="ECO:0000314"/>
    <property type="project" value="UniProtKB"/>
</dbReference>
<dbReference type="GO" id="GO:0005549">
    <property type="term" value="F:odorant binding"/>
    <property type="evidence" value="ECO:0007669"/>
    <property type="project" value="InterPro"/>
</dbReference>
<dbReference type="GO" id="GO:0042311">
    <property type="term" value="P:vasodilation"/>
    <property type="evidence" value="ECO:0007669"/>
    <property type="project" value="UniProtKB-KW"/>
</dbReference>
<dbReference type="FunFam" id="1.10.238.20:FF:000008">
    <property type="entry name" value="D7-related 4 protein"/>
    <property type="match status" value="1"/>
</dbReference>
<dbReference type="Gene3D" id="1.10.238.20">
    <property type="entry name" value="Pheromone/general odorant binding protein domain"/>
    <property type="match status" value="1"/>
</dbReference>
<dbReference type="InterPro" id="IPR006170">
    <property type="entry name" value="PBP/GOBP"/>
</dbReference>
<dbReference type="InterPro" id="IPR036728">
    <property type="entry name" value="PBP_GOBP_sf"/>
</dbReference>
<dbReference type="Pfam" id="PF01395">
    <property type="entry name" value="PBP_GOBP"/>
    <property type="match status" value="1"/>
</dbReference>
<dbReference type="SMART" id="SM00708">
    <property type="entry name" value="PhBP"/>
    <property type="match status" value="1"/>
</dbReference>
<dbReference type="SUPFAM" id="SSF47565">
    <property type="entry name" value="Insect pheromone/odorant-binding proteins"/>
    <property type="match status" value="1"/>
</dbReference>
<accession>A0A1S4GYH9</accession>
<accession>O76816</accession>
<accession>Q9UB32</accession>
<sequence length="169" mass="18636">MFGKLLPCAILVWCLFSLGQARQEETVEECERNIPASLKGRVCELRQYTPVQGKDMDSHMQCVLEVLGFVEDNGELVFQELLGVLKMVDPDGDHASSMKKCNAEAEKVDTSSKANTFYTCFLGTSSAQAFKYAVDYVELLRAGKLDMGTTFNAGQVSALMKQIDDGLCN</sequence>
<reference evidence="10 12" key="1">
    <citation type="journal article" date="2002" name="Insect Mol. Biol.">
        <title>A cluster of four D7-related genes is expressed in the salivary glands of the African malaria vector Anopheles gambiae.</title>
        <authorList>
            <person name="Arca' B."/>
            <person name="Lombardo F."/>
            <person name="Lanfrancotti A."/>
            <person name="Spanos L."/>
            <person name="Veneri M."/>
            <person name="Louis C."/>
            <person name="Coluzzi M."/>
        </authorList>
    </citation>
    <scope>NUCLEOTIDE SEQUENCE [GENOMIC DNA / MRNA]</scope>
    <scope>TISSUE SPECIFICITY</scope>
    <scope>DEVELOPMENTAL STAGE</scope>
    <source>
        <strain evidence="12">Gasua</strain>
    </source>
</reference>
<reference evidence="13" key="2">
    <citation type="journal article" date="2002" name="Science">
        <title>The genome sequence of the malaria mosquito Anopheles gambiae.</title>
        <authorList>
            <person name="Holt R.A."/>
            <person name="Subramanian G.M."/>
            <person name="Halpern A."/>
            <person name="Sutton G.G."/>
            <person name="Charlab R."/>
            <person name="Nusskern D.R."/>
            <person name="Wincker P."/>
            <person name="Clark A.G."/>
            <person name="Ribeiro J.M.C."/>
            <person name="Wides R."/>
            <person name="Salzberg S.L."/>
            <person name="Loftus B.J."/>
            <person name="Yandell M.D."/>
            <person name="Majoros W.H."/>
            <person name="Rusch D.B."/>
            <person name="Lai Z."/>
            <person name="Kraft C.L."/>
            <person name="Abril J.F."/>
            <person name="Anthouard V."/>
            <person name="Arensburger P."/>
            <person name="Atkinson P.W."/>
            <person name="Baden H."/>
            <person name="de Berardinis V."/>
            <person name="Baldwin D."/>
            <person name="Benes V."/>
            <person name="Biedler J."/>
            <person name="Blass C."/>
            <person name="Bolanos R."/>
            <person name="Boscus D."/>
            <person name="Barnstead M."/>
            <person name="Cai S."/>
            <person name="Center A."/>
            <person name="Chaturverdi K."/>
            <person name="Christophides G.K."/>
            <person name="Chrystal M.A.M."/>
            <person name="Clamp M."/>
            <person name="Cravchik A."/>
            <person name="Curwen V."/>
            <person name="Dana A."/>
            <person name="Delcher A."/>
            <person name="Dew I."/>
            <person name="Evans C.A."/>
            <person name="Flanigan M."/>
            <person name="Grundschober-Freimoser A."/>
            <person name="Friedli L."/>
            <person name="Gu Z."/>
            <person name="Guan P."/>
            <person name="Guigo R."/>
            <person name="Hillenmeyer M.E."/>
            <person name="Hladun S.L."/>
            <person name="Hogan J.R."/>
            <person name="Hong Y.S."/>
            <person name="Hoover J."/>
            <person name="Jaillon O."/>
            <person name="Ke Z."/>
            <person name="Kodira C.D."/>
            <person name="Kokoza E."/>
            <person name="Koutsos A."/>
            <person name="Letunic I."/>
            <person name="Levitsky A.A."/>
            <person name="Liang Y."/>
            <person name="Lin J.-J."/>
            <person name="Lobo N.F."/>
            <person name="Lopez J.R."/>
            <person name="Malek J.A."/>
            <person name="McIntosh T.C."/>
            <person name="Meister S."/>
            <person name="Miller J.R."/>
            <person name="Mobarry C."/>
            <person name="Mongin E."/>
            <person name="Murphy S.D."/>
            <person name="O'Brochta D.A."/>
            <person name="Pfannkoch C."/>
            <person name="Qi R."/>
            <person name="Regier M.A."/>
            <person name="Remington K."/>
            <person name="Shao H."/>
            <person name="Sharakhova M.V."/>
            <person name="Sitter C.D."/>
            <person name="Shetty J."/>
            <person name="Smith T.J."/>
            <person name="Strong R."/>
            <person name="Sun J."/>
            <person name="Thomasova D."/>
            <person name="Ton L.Q."/>
            <person name="Topalis P."/>
            <person name="Tu Z.J."/>
            <person name="Unger M.F."/>
            <person name="Walenz B."/>
            <person name="Wang A.H."/>
            <person name="Wang J."/>
            <person name="Wang M."/>
            <person name="Wang X."/>
            <person name="Woodford K.J."/>
            <person name="Wortman J.R."/>
            <person name="Wu M."/>
            <person name="Yao A."/>
            <person name="Zdobnov E.M."/>
            <person name="Zhang H."/>
            <person name="Zhao Q."/>
            <person name="Zhao S."/>
            <person name="Zhu S.C."/>
            <person name="Zhimulev I."/>
            <person name="Coluzzi M."/>
            <person name="della Torre A."/>
            <person name="Roth C.W."/>
            <person name="Louis C."/>
            <person name="Kalush F."/>
            <person name="Mural R.J."/>
            <person name="Myers E.W."/>
            <person name="Adams M.D."/>
            <person name="Smith H.O."/>
            <person name="Broder S."/>
            <person name="Gardner M.J."/>
            <person name="Fraser C.M."/>
            <person name="Birney E."/>
            <person name="Bork P."/>
            <person name="Brey P.T."/>
            <person name="Venter J.C."/>
            <person name="Weissenbach J."/>
            <person name="Kafatos F.C."/>
            <person name="Collins F.H."/>
            <person name="Hoffman S.L."/>
        </authorList>
    </citation>
    <scope>NUCLEOTIDE SEQUENCE [LARGE SCALE GENOMIC DNA]</scope>
    <source>
        <strain evidence="13">PEST</strain>
    </source>
</reference>
<reference evidence="11" key="3">
    <citation type="journal article" date="1999" name="Proc. Natl. Acad. Sci. U.S.A.">
        <title>Trapping cDNAs encoding secreted proteins from the salivary glands of the malaria vector Anopheles gambiae.</title>
        <authorList>
            <person name="Arca B."/>
            <person name="Lombardo F."/>
            <person name="de Lara Capurro M."/>
            <person name="della Torre A."/>
            <person name="Dimopoulos G."/>
            <person name="James A.A."/>
            <person name="Coluzzi M."/>
        </authorList>
    </citation>
    <scope>NUCLEOTIDE SEQUENCE [MRNA] OF 1-156</scope>
    <scope>TISSUE SPECIFICITY</scope>
    <source>
        <strain evidence="11">Gasua</strain>
    </source>
</reference>
<reference evidence="9" key="4">
    <citation type="journal article" date="2006" name="J. Biol. Chem.">
        <title>Function and evolution of a mosquito salivary protein family.</title>
        <authorList>
            <person name="Calvo E."/>
            <person name="Mans B.J."/>
            <person name="Andersen J.F."/>
            <person name="Ribeiro J.M."/>
        </authorList>
    </citation>
    <scope>FUNCTION</scope>
    <source>
        <strain evidence="8">Giles</strain>
    </source>
</reference>
<reference key="5">
    <citation type="journal article" date="2007" name="Microbes Infect.">
        <title>Antibody response against saliva antigens of Anopheles gambiae and Aedes aegypti in travellers in tropical Africa.</title>
        <authorList>
            <person name="Orlandi-Pradines E."/>
            <person name="Almeras L."/>
            <person name="Denis de Senneville L."/>
            <person name="Barbe S."/>
            <person name="Remoue F."/>
            <person name="Villard C."/>
            <person name="Cornelie S."/>
            <person name="Penhoat K."/>
            <person name="Pascual A."/>
            <person name="Bourgouin C."/>
            <person name="Fontenille D."/>
            <person name="Bonnet J."/>
            <person name="Corre-Catelin N."/>
            <person name="Reiter P."/>
            <person name="Pages F."/>
            <person name="Laffite D."/>
            <person name="Boulanger D."/>
            <person name="Simondon F."/>
            <person name="Pradines B."/>
            <person name="Fusai T."/>
            <person name="Rogier C."/>
        </authorList>
    </citation>
    <scope>IDENTIFICATION BY MASS SPECTROMETRY</scope>
    <scope>SUBCELLULAR LOCATION</scope>
    <scope>TISSUE SPECIFICITY</scope>
</reference>
<protein>
    <recommendedName>
        <fullName evidence="9">Short form salivary protein D7R3</fullName>
    </recommendedName>
    <alternativeName>
        <fullName evidence="12">D7-related 3 protein</fullName>
    </alternativeName>
</protein>
<feature type="signal peptide" evidence="3">
    <location>
        <begin position="1"/>
        <end position="21"/>
    </location>
</feature>
<feature type="chain" id="PRO_5010148875" description="Short form salivary protein D7R3" evidence="3">
    <location>
        <begin position="22"/>
        <end position="169"/>
    </location>
</feature>
<feature type="binding site" evidence="2">
    <location>
        <position position="31"/>
    </location>
    <ligand>
        <name>noradrenaline</name>
        <dbReference type="ChEBI" id="CHEBI:166902"/>
    </ligand>
</feature>
<feature type="binding site" evidence="2">
    <location>
        <position position="31"/>
    </location>
    <ligand>
        <name>serotonin</name>
        <dbReference type="ChEBI" id="CHEBI:350546"/>
    </ligand>
</feature>
<feature type="binding site" evidence="2">
    <location>
        <position position="46"/>
    </location>
    <ligand>
        <name>noradrenaline</name>
        <dbReference type="ChEBI" id="CHEBI:166902"/>
    </ligand>
</feature>
<feature type="binding site" evidence="2">
    <location>
        <position position="59"/>
    </location>
    <ligand>
        <name>serotonin</name>
        <dbReference type="ChEBI" id="CHEBI:350546"/>
    </ligand>
</feature>
<feature type="binding site" evidence="2">
    <location>
        <position position="118"/>
    </location>
    <ligand>
        <name>histamine</name>
        <dbReference type="ChEBI" id="CHEBI:58432"/>
    </ligand>
</feature>
<feature type="binding site" evidence="2">
    <location>
        <position position="118"/>
    </location>
    <ligand>
        <name>serotonin</name>
        <dbReference type="ChEBI" id="CHEBI:350546"/>
    </ligand>
</feature>
<feature type="binding site" evidence="2">
    <location>
        <position position="135"/>
    </location>
    <ligand>
        <name>histamine</name>
        <dbReference type="ChEBI" id="CHEBI:58432"/>
    </ligand>
</feature>
<feature type="binding site" evidence="2">
    <location>
        <position position="135"/>
    </location>
    <ligand>
        <name>noradrenaline</name>
        <dbReference type="ChEBI" id="CHEBI:166902"/>
    </ligand>
</feature>
<feature type="binding site" evidence="2">
    <location>
        <position position="135"/>
    </location>
    <ligand>
        <name>serotonin</name>
        <dbReference type="ChEBI" id="CHEBI:350546"/>
    </ligand>
</feature>
<feature type="binding site" evidence="2">
    <location>
        <position position="138"/>
    </location>
    <ligand>
        <name>histamine</name>
        <dbReference type="ChEBI" id="CHEBI:58432"/>
    </ligand>
</feature>
<feature type="binding site" evidence="2">
    <location>
        <position position="138"/>
    </location>
    <ligand>
        <name>noradrenaline</name>
        <dbReference type="ChEBI" id="CHEBI:166902"/>
    </ligand>
</feature>
<feature type="binding site" evidence="2">
    <location>
        <position position="138"/>
    </location>
    <ligand>
        <name>serotonin</name>
        <dbReference type="ChEBI" id="CHEBI:350546"/>
    </ligand>
</feature>
<feature type="disulfide bond" evidence="2">
    <location>
        <begin position="30"/>
        <end position="62"/>
    </location>
</feature>
<feature type="disulfide bond" evidence="2">
    <location>
        <begin position="43"/>
        <end position="168"/>
    </location>
</feature>
<feature type="disulfide bond" evidence="2">
    <location>
        <begin position="101"/>
        <end position="120"/>
    </location>
</feature>
<feature type="sequence conflict" description="In Ref. 1; AAK84943/CAB39729 and 3; CAA03871." evidence="9" ref="1 3">
    <original>V</original>
    <variation>L</variation>
    <location>
        <position position="12"/>
    </location>
</feature>
<feature type="sequence conflict" description="In Ref. 1; AAK84943/CAB39729 and 3; CAA03871." evidence="9" ref="1 3">
    <original>G</original>
    <variation>E</variation>
    <location>
        <position position="40"/>
    </location>
</feature>
<feature type="sequence conflict" description="In Ref. 1; AAK84943/CAB39729 and 3; CAA03871." evidence="9" ref="1 3">
    <original>S</original>
    <variation>G</variation>
    <location>
        <position position="96"/>
    </location>
</feature>
<feature type="sequence conflict" description="In Ref. 3; CAA03871." evidence="9" ref="3">
    <original>A</original>
    <variation>G</variation>
    <location>
        <position position="103"/>
    </location>
</feature>
<evidence type="ECO:0000250" key="1">
    <source>
        <dbReference type="UniProtKB" id="P18153"/>
    </source>
</evidence>
<evidence type="ECO:0000250" key="2">
    <source>
        <dbReference type="UniProtKB" id="Q7PNF2"/>
    </source>
</evidence>
<evidence type="ECO:0000255" key="3"/>
<evidence type="ECO:0000269" key="4">
    <source>
    </source>
</evidence>
<evidence type="ECO:0000269" key="5">
    <source>
    </source>
</evidence>
<evidence type="ECO:0000269" key="6">
    <source>
    </source>
</evidence>
<evidence type="ECO:0000269" key="7">
    <source>
    </source>
</evidence>
<evidence type="ECO:0000303" key="8">
    <source>
    </source>
</evidence>
<evidence type="ECO:0000305" key="9"/>
<evidence type="ECO:0000312" key="10">
    <source>
        <dbReference type="EMBL" id="AAK84943.1"/>
    </source>
</evidence>
<evidence type="ECO:0000312" key="11">
    <source>
        <dbReference type="EMBL" id="CAA03871.1"/>
    </source>
</evidence>
<evidence type="ECO:0000312" key="12">
    <source>
        <dbReference type="EMBL" id="CAB39729.1"/>
    </source>
</evidence>
<evidence type="ECO:0000312" key="13">
    <source>
        <dbReference type="Proteomes" id="UP000007062"/>
    </source>
</evidence>
<keyword id="KW-1015">Disulfide bond</keyword>
<keyword id="KW-1185">Reference proteome</keyword>
<keyword id="KW-0964">Secreted</keyword>
<keyword id="KW-0732">Signal</keyword>
<keyword id="KW-0838">Vasoactive</keyword>
<keyword id="KW-0840">Vasodilator</keyword>
<gene>
    <name evidence="8" type="primary">D7r3</name>
</gene>
<proteinExistence type="evidence at protein level"/>